<sequence length="257" mass="28048">MLAKRLVPCLDVKDGKVVKGVQFRNHEIVGDIVPLAARYAEEGADELVFYDITASAHERVVDKSWVSRVAEQIDIPFCVAGGIKTISQARELLAFGADKISINSPALTDPSLISRLQDEFGRQCIVIGIDSFFDATSNSYKVKQFTGDEAATKDTQWFTQDWVEEVQKRGCGEIVLNVMNQDGVRGGYDIKQLSLVRAICDVPLIASGGAGTMAHFRDVFIEAKVDAALAASVFHKAIINIGELKAYLAAEGIAIRR</sequence>
<gene>
    <name evidence="1" type="primary">hisF</name>
    <name type="ordered locus">Sbal223_1927</name>
</gene>
<accession>B8E999</accession>
<protein>
    <recommendedName>
        <fullName evidence="1">Imidazole glycerol phosphate synthase subunit HisF</fullName>
        <ecNumber evidence="1">4.3.2.10</ecNumber>
    </recommendedName>
    <alternativeName>
        <fullName evidence="1">IGP synthase cyclase subunit</fullName>
    </alternativeName>
    <alternativeName>
        <fullName evidence="1">IGP synthase subunit HisF</fullName>
    </alternativeName>
    <alternativeName>
        <fullName evidence="1">ImGP synthase subunit HisF</fullName>
        <shortName evidence="1">IGPS subunit HisF</shortName>
    </alternativeName>
</protein>
<dbReference type="EC" id="4.3.2.10" evidence="1"/>
<dbReference type="EMBL" id="CP001252">
    <property type="protein sequence ID" value="ACK46432.1"/>
    <property type="molecule type" value="Genomic_DNA"/>
</dbReference>
<dbReference type="RefSeq" id="WP_006081894.1">
    <property type="nucleotide sequence ID" value="NC_011663.1"/>
</dbReference>
<dbReference type="SMR" id="B8E999"/>
<dbReference type="GeneID" id="11772644"/>
<dbReference type="KEGG" id="sbp:Sbal223_1927"/>
<dbReference type="HOGENOM" id="CLU_048577_4_0_6"/>
<dbReference type="UniPathway" id="UPA00031">
    <property type="reaction ID" value="UER00010"/>
</dbReference>
<dbReference type="Proteomes" id="UP000002507">
    <property type="component" value="Chromosome"/>
</dbReference>
<dbReference type="GO" id="GO:0005737">
    <property type="term" value="C:cytoplasm"/>
    <property type="evidence" value="ECO:0007669"/>
    <property type="project" value="UniProtKB-SubCell"/>
</dbReference>
<dbReference type="GO" id="GO:0000107">
    <property type="term" value="F:imidazoleglycerol-phosphate synthase activity"/>
    <property type="evidence" value="ECO:0007669"/>
    <property type="project" value="UniProtKB-UniRule"/>
</dbReference>
<dbReference type="GO" id="GO:0016829">
    <property type="term" value="F:lyase activity"/>
    <property type="evidence" value="ECO:0007669"/>
    <property type="project" value="UniProtKB-KW"/>
</dbReference>
<dbReference type="GO" id="GO:0000105">
    <property type="term" value="P:L-histidine biosynthetic process"/>
    <property type="evidence" value="ECO:0007669"/>
    <property type="project" value="UniProtKB-UniRule"/>
</dbReference>
<dbReference type="CDD" id="cd04731">
    <property type="entry name" value="HisF"/>
    <property type="match status" value="1"/>
</dbReference>
<dbReference type="FunFam" id="3.20.20.70:FF:000006">
    <property type="entry name" value="Imidazole glycerol phosphate synthase subunit HisF"/>
    <property type="match status" value="1"/>
</dbReference>
<dbReference type="Gene3D" id="3.20.20.70">
    <property type="entry name" value="Aldolase class I"/>
    <property type="match status" value="1"/>
</dbReference>
<dbReference type="HAMAP" id="MF_01013">
    <property type="entry name" value="HisF"/>
    <property type="match status" value="1"/>
</dbReference>
<dbReference type="InterPro" id="IPR013785">
    <property type="entry name" value="Aldolase_TIM"/>
</dbReference>
<dbReference type="InterPro" id="IPR006062">
    <property type="entry name" value="His_biosynth"/>
</dbReference>
<dbReference type="InterPro" id="IPR004651">
    <property type="entry name" value="HisF"/>
</dbReference>
<dbReference type="InterPro" id="IPR050064">
    <property type="entry name" value="IGPS_HisA/HisF"/>
</dbReference>
<dbReference type="InterPro" id="IPR011060">
    <property type="entry name" value="RibuloseP-bd_barrel"/>
</dbReference>
<dbReference type="NCBIfam" id="TIGR00735">
    <property type="entry name" value="hisF"/>
    <property type="match status" value="1"/>
</dbReference>
<dbReference type="PANTHER" id="PTHR21235:SF2">
    <property type="entry name" value="IMIDAZOLE GLYCEROL PHOSPHATE SYNTHASE HISHF"/>
    <property type="match status" value="1"/>
</dbReference>
<dbReference type="PANTHER" id="PTHR21235">
    <property type="entry name" value="IMIDAZOLE GLYCEROL PHOSPHATE SYNTHASE SUBUNIT HISF/H IGP SYNTHASE SUBUNIT HISF/H"/>
    <property type="match status" value="1"/>
</dbReference>
<dbReference type="Pfam" id="PF00977">
    <property type="entry name" value="His_biosynth"/>
    <property type="match status" value="1"/>
</dbReference>
<dbReference type="SUPFAM" id="SSF51366">
    <property type="entry name" value="Ribulose-phoshate binding barrel"/>
    <property type="match status" value="1"/>
</dbReference>
<keyword id="KW-0028">Amino-acid biosynthesis</keyword>
<keyword id="KW-0963">Cytoplasm</keyword>
<keyword id="KW-0368">Histidine biosynthesis</keyword>
<keyword id="KW-0456">Lyase</keyword>
<feature type="chain" id="PRO_1000148939" description="Imidazole glycerol phosphate synthase subunit HisF">
    <location>
        <begin position="1"/>
        <end position="257"/>
    </location>
</feature>
<feature type="active site" evidence="1">
    <location>
        <position position="11"/>
    </location>
</feature>
<feature type="active site" evidence="1">
    <location>
        <position position="130"/>
    </location>
</feature>
<proteinExistence type="inferred from homology"/>
<comment type="function">
    <text evidence="1">IGPS catalyzes the conversion of PRFAR and glutamine to IGP, AICAR and glutamate. The HisF subunit catalyzes the cyclization activity that produces IGP and AICAR from PRFAR using the ammonia provided by the HisH subunit.</text>
</comment>
<comment type="catalytic activity">
    <reaction evidence="1">
        <text>5-[(5-phospho-1-deoxy-D-ribulos-1-ylimino)methylamino]-1-(5-phospho-beta-D-ribosyl)imidazole-4-carboxamide + L-glutamine = D-erythro-1-(imidazol-4-yl)glycerol 3-phosphate + 5-amino-1-(5-phospho-beta-D-ribosyl)imidazole-4-carboxamide + L-glutamate + H(+)</text>
        <dbReference type="Rhea" id="RHEA:24793"/>
        <dbReference type="ChEBI" id="CHEBI:15378"/>
        <dbReference type="ChEBI" id="CHEBI:29985"/>
        <dbReference type="ChEBI" id="CHEBI:58278"/>
        <dbReference type="ChEBI" id="CHEBI:58359"/>
        <dbReference type="ChEBI" id="CHEBI:58475"/>
        <dbReference type="ChEBI" id="CHEBI:58525"/>
        <dbReference type="EC" id="4.3.2.10"/>
    </reaction>
</comment>
<comment type="pathway">
    <text evidence="1">Amino-acid biosynthesis; L-histidine biosynthesis; L-histidine from 5-phospho-alpha-D-ribose 1-diphosphate: step 5/9.</text>
</comment>
<comment type="subunit">
    <text evidence="1">Heterodimer of HisH and HisF.</text>
</comment>
<comment type="subcellular location">
    <subcellularLocation>
        <location evidence="1">Cytoplasm</location>
    </subcellularLocation>
</comment>
<comment type="similarity">
    <text evidence="1">Belongs to the HisA/HisF family.</text>
</comment>
<organism>
    <name type="scientific">Shewanella baltica (strain OS223)</name>
    <dbReference type="NCBI Taxonomy" id="407976"/>
    <lineage>
        <taxon>Bacteria</taxon>
        <taxon>Pseudomonadati</taxon>
        <taxon>Pseudomonadota</taxon>
        <taxon>Gammaproteobacteria</taxon>
        <taxon>Alteromonadales</taxon>
        <taxon>Shewanellaceae</taxon>
        <taxon>Shewanella</taxon>
    </lineage>
</organism>
<reference key="1">
    <citation type="submission" date="2008-12" db="EMBL/GenBank/DDBJ databases">
        <title>Complete sequence of chromosome of Shewanella baltica OS223.</title>
        <authorList>
            <consortium name="US DOE Joint Genome Institute"/>
            <person name="Lucas S."/>
            <person name="Copeland A."/>
            <person name="Lapidus A."/>
            <person name="Glavina del Rio T."/>
            <person name="Dalin E."/>
            <person name="Tice H."/>
            <person name="Bruce D."/>
            <person name="Goodwin L."/>
            <person name="Pitluck S."/>
            <person name="Chertkov O."/>
            <person name="Meincke L."/>
            <person name="Brettin T."/>
            <person name="Detter J.C."/>
            <person name="Han C."/>
            <person name="Kuske C.R."/>
            <person name="Larimer F."/>
            <person name="Land M."/>
            <person name="Hauser L."/>
            <person name="Kyrpides N."/>
            <person name="Ovchinnikova G."/>
            <person name="Brettar I."/>
            <person name="Rodrigues J."/>
            <person name="Konstantinidis K."/>
            <person name="Tiedje J."/>
        </authorList>
    </citation>
    <scope>NUCLEOTIDE SEQUENCE [LARGE SCALE GENOMIC DNA]</scope>
    <source>
        <strain>OS223</strain>
    </source>
</reference>
<name>HIS6_SHEB2</name>
<evidence type="ECO:0000255" key="1">
    <source>
        <dbReference type="HAMAP-Rule" id="MF_01013"/>
    </source>
</evidence>